<protein>
    <recommendedName>
        <fullName>Anoctamin-2</fullName>
    </recommendedName>
    <alternativeName>
        <fullName>Transmembrane protein 16B</fullName>
    </alternativeName>
</protein>
<gene>
    <name type="primary">ANO2</name>
    <name type="synonym">C12orf3</name>
    <name type="synonym">TMEM16B</name>
</gene>
<organism>
    <name type="scientific">Homo sapiens</name>
    <name type="common">Human</name>
    <dbReference type="NCBI Taxonomy" id="9606"/>
    <lineage>
        <taxon>Eukaryota</taxon>
        <taxon>Metazoa</taxon>
        <taxon>Chordata</taxon>
        <taxon>Craniata</taxon>
        <taxon>Vertebrata</taxon>
        <taxon>Euteleostomi</taxon>
        <taxon>Mammalia</taxon>
        <taxon>Eutheria</taxon>
        <taxon>Euarchontoglires</taxon>
        <taxon>Primates</taxon>
        <taxon>Haplorrhini</taxon>
        <taxon>Catarrhini</taxon>
        <taxon>Hominidae</taxon>
        <taxon>Homo</taxon>
    </lineage>
</organism>
<proteinExistence type="evidence at protein level"/>
<keyword id="KW-0025">Alternative splicing</keyword>
<keyword id="KW-0106">Calcium</keyword>
<keyword id="KW-1003">Cell membrane</keyword>
<keyword id="KW-0868">Chloride</keyword>
<keyword id="KW-0869">Chloride channel</keyword>
<keyword id="KW-0325">Glycoprotein</keyword>
<keyword id="KW-0407">Ion channel</keyword>
<keyword id="KW-0406">Ion transport</keyword>
<keyword id="KW-0472">Membrane</keyword>
<keyword id="KW-1267">Proteomics identification</keyword>
<keyword id="KW-1185">Reference proteome</keyword>
<keyword id="KW-0812">Transmembrane</keyword>
<keyword id="KW-1133">Transmembrane helix</keyword>
<keyword id="KW-0813">Transport</keyword>
<name>ANO2_HUMAN</name>
<reference key="1">
    <citation type="submission" date="2000-02" db="EMBL/GenBank/DDBJ databases">
        <title>Transcripts in 12p13.3.</title>
        <authorList>
            <person name="Lorenz B."/>
            <person name="White K.E."/>
            <person name="Econs M.J."/>
            <person name="Strom T.M."/>
        </authorList>
    </citation>
    <scope>NUCLEOTIDE SEQUENCE [MRNA] (ISOFORM 2)</scope>
    <source>
        <tissue>Retina</tissue>
    </source>
</reference>
<reference key="2">
    <citation type="journal article" date="2009" name="J. Neurosci.">
        <title>TMEM16B, a novel protein with calcium-dependent chloride channel activity, associates with a presynaptic protein complex in photoreceptor terminals.</title>
        <authorList>
            <person name="Stoehr H."/>
            <person name="Heisig J.B."/>
            <person name="Benz P.M."/>
            <person name="Schoeberl S."/>
            <person name="Milenkovic V.M."/>
            <person name="Strauss O."/>
            <person name="Aartsen W.M."/>
            <person name="Wijnholds J."/>
            <person name="Weber B.H.F."/>
            <person name="Schulz H.L."/>
        </authorList>
    </citation>
    <scope>NUCLEOTIDE SEQUENCE [MRNA] (ISOFORM 1)</scope>
    <scope>FUNCTION</scope>
    <scope>TRANSPORTER ACTIVITY</scope>
    <scope>GLYCOSYLATION</scope>
    <scope>SUBUNIT</scope>
    <scope>TISSUE SPECIFICITY</scope>
    <source>
        <tissue>Retina</tissue>
    </source>
</reference>
<reference key="3">
    <citation type="journal article" date="2006" name="Nature">
        <title>The finished DNA sequence of human chromosome 12.</title>
        <authorList>
            <person name="Scherer S.E."/>
            <person name="Muzny D.M."/>
            <person name="Buhay C.J."/>
            <person name="Chen R."/>
            <person name="Cree A."/>
            <person name="Ding Y."/>
            <person name="Dugan-Rocha S."/>
            <person name="Gill R."/>
            <person name="Gunaratne P."/>
            <person name="Harris R.A."/>
            <person name="Hawes A.C."/>
            <person name="Hernandez J."/>
            <person name="Hodgson A.V."/>
            <person name="Hume J."/>
            <person name="Jackson A."/>
            <person name="Khan Z.M."/>
            <person name="Kovar-Smith C."/>
            <person name="Lewis L.R."/>
            <person name="Lozado R.J."/>
            <person name="Metzker M.L."/>
            <person name="Milosavljevic A."/>
            <person name="Miner G.R."/>
            <person name="Montgomery K.T."/>
            <person name="Morgan M.B."/>
            <person name="Nazareth L.V."/>
            <person name="Scott G."/>
            <person name="Sodergren E."/>
            <person name="Song X.-Z."/>
            <person name="Steffen D."/>
            <person name="Lovering R.C."/>
            <person name="Wheeler D.A."/>
            <person name="Worley K.C."/>
            <person name="Yuan Y."/>
            <person name="Zhang Z."/>
            <person name="Adams C.Q."/>
            <person name="Ansari-Lari M.A."/>
            <person name="Ayele M."/>
            <person name="Brown M.J."/>
            <person name="Chen G."/>
            <person name="Chen Z."/>
            <person name="Clerc-Blankenburg K.P."/>
            <person name="Davis C."/>
            <person name="Delgado O."/>
            <person name="Dinh H.H."/>
            <person name="Draper H."/>
            <person name="Gonzalez-Garay M.L."/>
            <person name="Havlak P."/>
            <person name="Jackson L.R."/>
            <person name="Jacob L.S."/>
            <person name="Kelly S.H."/>
            <person name="Li L."/>
            <person name="Li Z."/>
            <person name="Liu J."/>
            <person name="Liu W."/>
            <person name="Lu J."/>
            <person name="Maheshwari M."/>
            <person name="Nguyen B.-V."/>
            <person name="Okwuonu G.O."/>
            <person name="Pasternak S."/>
            <person name="Perez L.M."/>
            <person name="Plopper F.J.H."/>
            <person name="Santibanez J."/>
            <person name="Shen H."/>
            <person name="Tabor P.E."/>
            <person name="Verduzco D."/>
            <person name="Waldron L."/>
            <person name="Wang Q."/>
            <person name="Williams G.A."/>
            <person name="Zhang J."/>
            <person name="Zhou J."/>
            <person name="Allen C.C."/>
            <person name="Amin A.G."/>
            <person name="Anyalebechi V."/>
            <person name="Bailey M."/>
            <person name="Barbaria J.A."/>
            <person name="Bimage K.E."/>
            <person name="Bryant N.P."/>
            <person name="Burch P.E."/>
            <person name="Burkett C.E."/>
            <person name="Burrell K.L."/>
            <person name="Calderon E."/>
            <person name="Cardenas V."/>
            <person name="Carter K."/>
            <person name="Casias K."/>
            <person name="Cavazos I."/>
            <person name="Cavazos S.R."/>
            <person name="Ceasar H."/>
            <person name="Chacko J."/>
            <person name="Chan S.N."/>
            <person name="Chavez D."/>
            <person name="Christopoulos C."/>
            <person name="Chu J."/>
            <person name="Cockrell R."/>
            <person name="Cox C.D."/>
            <person name="Dang M."/>
            <person name="Dathorne S.R."/>
            <person name="David R."/>
            <person name="Davis C.M."/>
            <person name="Davy-Carroll L."/>
            <person name="Deshazo D.R."/>
            <person name="Donlin J.E."/>
            <person name="D'Souza L."/>
            <person name="Eaves K.A."/>
            <person name="Egan A."/>
            <person name="Emery-Cohen A.J."/>
            <person name="Escotto M."/>
            <person name="Flagg N."/>
            <person name="Forbes L.D."/>
            <person name="Gabisi A.M."/>
            <person name="Garza M."/>
            <person name="Hamilton C."/>
            <person name="Henderson N."/>
            <person name="Hernandez O."/>
            <person name="Hines S."/>
            <person name="Hogues M.E."/>
            <person name="Huang M."/>
            <person name="Idlebird D.G."/>
            <person name="Johnson R."/>
            <person name="Jolivet A."/>
            <person name="Jones S."/>
            <person name="Kagan R."/>
            <person name="King L.M."/>
            <person name="Leal B."/>
            <person name="Lebow H."/>
            <person name="Lee S."/>
            <person name="LeVan J.M."/>
            <person name="Lewis L.C."/>
            <person name="London P."/>
            <person name="Lorensuhewa L.M."/>
            <person name="Loulseged H."/>
            <person name="Lovett D.A."/>
            <person name="Lucier A."/>
            <person name="Lucier R.L."/>
            <person name="Ma J."/>
            <person name="Madu R.C."/>
            <person name="Mapua P."/>
            <person name="Martindale A.D."/>
            <person name="Martinez E."/>
            <person name="Massey E."/>
            <person name="Mawhiney S."/>
            <person name="Meador M.G."/>
            <person name="Mendez S."/>
            <person name="Mercado C."/>
            <person name="Mercado I.C."/>
            <person name="Merritt C.E."/>
            <person name="Miner Z.L."/>
            <person name="Minja E."/>
            <person name="Mitchell T."/>
            <person name="Mohabbat F."/>
            <person name="Mohabbat K."/>
            <person name="Montgomery B."/>
            <person name="Moore N."/>
            <person name="Morris S."/>
            <person name="Munidasa M."/>
            <person name="Ngo R.N."/>
            <person name="Nguyen N.B."/>
            <person name="Nickerson E."/>
            <person name="Nwaokelemeh O.O."/>
            <person name="Nwokenkwo S."/>
            <person name="Obregon M."/>
            <person name="Oguh M."/>
            <person name="Oragunye N."/>
            <person name="Oviedo R.J."/>
            <person name="Parish B.J."/>
            <person name="Parker D.N."/>
            <person name="Parrish J."/>
            <person name="Parks K.L."/>
            <person name="Paul H.A."/>
            <person name="Payton B.A."/>
            <person name="Perez A."/>
            <person name="Perrin W."/>
            <person name="Pickens A."/>
            <person name="Primus E.L."/>
            <person name="Pu L.-L."/>
            <person name="Puazo M."/>
            <person name="Quiles M.M."/>
            <person name="Quiroz J.B."/>
            <person name="Rabata D."/>
            <person name="Reeves K."/>
            <person name="Ruiz S.J."/>
            <person name="Shao H."/>
            <person name="Sisson I."/>
            <person name="Sonaike T."/>
            <person name="Sorelle R.P."/>
            <person name="Sutton A.E."/>
            <person name="Svatek A.F."/>
            <person name="Svetz L.A."/>
            <person name="Tamerisa K.S."/>
            <person name="Taylor T.R."/>
            <person name="Teague B."/>
            <person name="Thomas N."/>
            <person name="Thorn R.D."/>
            <person name="Trejos Z.Y."/>
            <person name="Trevino B.K."/>
            <person name="Ukegbu O.N."/>
            <person name="Urban J.B."/>
            <person name="Vasquez L.I."/>
            <person name="Vera V.A."/>
            <person name="Villasana D.M."/>
            <person name="Wang L."/>
            <person name="Ward-Moore S."/>
            <person name="Warren J.T."/>
            <person name="Wei X."/>
            <person name="White F."/>
            <person name="Williamson A.L."/>
            <person name="Wleczyk R."/>
            <person name="Wooden H.S."/>
            <person name="Wooden S.H."/>
            <person name="Yen J."/>
            <person name="Yoon L."/>
            <person name="Yoon V."/>
            <person name="Zorrilla S.E."/>
            <person name="Nelson D."/>
            <person name="Kucherlapati R."/>
            <person name="Weinstock G."/>
            <person name="Gibbs R.A."/>
        </authorList>
    </citation>
    <scope>NUCLEOTIDE SEQUENCE [LARGE SCALE GENOMIC DNA]</scope>
</reference>
<reference key="4">
    <citation type="journal article" date="2004" name="Nat. Genet.">
        <title>Complete sequencing and characterization of 21,243 full-length human cDNAs.</title>
        <authorList>
            <person name="Ota T."/>
            <person name="Suzuki Y."/>
            <person name="Nishikawa T."/>
            <person name="Otsuki T."/>
            <person name="Sugiyama T."/>
            <person name="Irie R."/>
            <person name="Wakamatsu A."/>
            <person name="Hayashi K."/>
            <person name="Sato H."/>
            <person name="Nagai K."/>
            <person name="Kimura K."/>
            <person name="Makita H."/>
            <person name="Sekine M."/>
            <person name="Obayashi M."/>
            <person name="Nishi T."/>
            <person name="Shibahara T."/>
            <person name="Tanaka T."/>
            <person name="Ishii S."/>
            <person name="Yamamoto J."/>
            <person name="Saito K."/>
            <person name="Kawai Y."/>
            <person name="Isono Y."/>
            <person name="Nakamura Y."/>
            <person name="Nagahari K."/>
            <person name="Murakami K."/>
            <person name="Yasuda T."/>
            <person name="Iwayanagi T."/>
            <person name="Wagatsuma M."/>
            <person name="Shiratori A."/>
            <person name="Sudo H."/>
            <person name="Hosoiri T."/>
            <person name="Kaku Y."/>
            <person name="Kodaira H."/>
            <person name="Kondo H."/>
            <person name="Sugawara M."/>
            <person name="Takahashi M."/>
            <person name="Kanda K."/>
            <person name="Yokoi T."/>
            <person name="Furuya T."/>
            <person name="Kikkawa E."/>
            <person name="Omura Y."/>
            <person name="Abe K."/>
            <person name="Kamihara K."/>
            <person name="Katsuta N."/>
            <person name="Sato K."/>
            <person name="Tanikawa M."/>
            <person name="Yamazaki M."/>
            <person name="Ninomiya K."/>
            <person name="Ishibashi T."/>
            <person name="Yamashita H."/>
            <person name="Murakawa K."/>
            <person name="Fujimori K."/>
            <person name="Tanai H."/>
            <person name="Kimata M."/>
            <person name="Watanabe M."/>
            <person name="Hiraoka S."/>
            <person name="Chiba Y."/>
            <person name="Ishida S."/>
            <person name="Ono Y."/>
            <person name="Takiguchi S."/>
            <person name="Watanabe S."/>
            <person name="Yosida M."/>
            <person name="Hotuta T."/>
            <person name="Kusano J."/>
            <person name="Kanehori K."/>
            <person name="Takahashi-Fujii A."/>
            <person name="Hara H."/>
            <person name="Tanase T.-O."/>
            <person name="Nomura Y."/>
            <person name="Togiya S."/>
            <person name="Komai F."/>
            <person name="Hara R."/>
            <person name="Takeuchi K."/>
            <person name="Arita M."/>
            <person name="Imose N."/>
            <person name="Musashino K."/>
            <person name="Yuuki H."/>
            <person name="Oshima A."/>
            <person name="Sasaki N."/>
            <person name="Aotsuka S."/>
            <person name="Yoshikawa Y."/>
            <person name="Matsunawa H."/>
            <person name="Ichihara T."/>
            <person name="Shiohata N."/>
            <person name="Sano S."/>
            <person name="Moriya S."/>
            <person name="Momiyama H."/>
            <person name="Satoh N."/>
            <person name="Takami S."/>
            <person name="Terashima Y."/>
            <person name="Suzuki O."/>
            <person name="Nakagawa S."/>
            <person name="Senoh A."/>
            <person name="Mizoguchi H."/>
            <person name="Goto Y."/>
            <person name="Shimizu F."/>
            <person name="Wakebe H."/>
            <person name="Hishigaki H."/>
            <person name="Watanabe T."/>
            <person name="Sugiyama A."/>
            <person name="Takemoto M."/>
            <person name="Kawakami B."/>
            <person name="Yamazaki M."/>
            <person name="Watanabe K."/>
            <person name="Kumagai A."/>
            <person name="Itakura S."/>
            <person name="Fukuzumi Y."/>
            <person name="Fujimori Y."/>
            <person name="Komiyama M."/>
            <person name="Tashiro H."/>
            <person name="Tanigami A."/>
            <person name="Fujiwara T."/>
            <person name="Ono T."/>
            <person name="Yamada K."/>
            <person name="Fujii Y."/>
            <person name="Ozaki K."/>
            <person name="Hirao M."/>
            <person name="Ohmori Y."/>
            <person name="Kawabata A."/>
            <person name="Hikiji T."/>
            <person name="Kobatake N."/>
            <person name="Inagaki H."/>
            <person name="Ikema Y."/>
            <person name="Okamoto S."/>
            <person name="Okitani R."/>
            <person name="Kawakami T."/>
            <person name="Noguchi S."/>
            <person name="Itoh T."/>
            <person name="Shigeta K."/>
            <person name="Senba T."/>
            <person name="Matsumura K."/>
            <person name="Nakajima Y."/>
            <person name="Mizuno T."/>
            <person name="Morinaga M."/>
            <person name="Sasaki M."/>
            <person name="Togashi T."/>
            <person name="Oyama M."/>
            <person name="Hata H."/>
            <person name="Watanabe M."/>
            <person name="Komatsu T."/>
            <person name="Mizushima-Sugano J."/>
            <person name="Satoh T."/>
            <person name="Shirai Y."/>
            <person name="Takahashi Y."/>
            <person name="Nakagawa K."/>
            <person name="Okumura K."/>
            <person name="Nagase T."/>
            <person name="Nomura N."/>
            <person name="Kikuchi H."/>
            <person name="Masuho Y."/>
            <person name="Yamashita R."/>
            <person name="Nakai K."/>
            <person name="Yada T."/>
            <person name="Nakamura Y."/>
            <person name="Ohara O."/>
            <person name="Isogai T."/>
            <person name="Sugano S."/>
        </authorList>
    </citation>
    <scope>NUCLEOTIDE SEQUENCE [LARGE SCALE MRNA] OF 556-999 (ISOFORMS 1/2)</scope>
    <source>
        <tissue>Retinoblastoma</tissue>
    </source>
</reference>
<reference key="5">
    <citation type="journal article" date="2010" name="J. Biol. Chem.">
        <title>Expression and function of epithelial anoctamins.</title>
        <authorList>
            <person name="Schreiber R."/>
            <person name="Uliyakina I."/>
            <person name="Kongsuphol P."/>
            <person name="Warth R."/>
            <person name="Mirza M."/>
            <person name="Martins J.R."/>
            <person name="Kunzelmann K."/>
        </authorList>
    </citation>
    <scope>FUNCTION</scope>
    <scope>SUBCELLULAR LOCATION</scope>
</reference>
<reference key="6">
    <citation type="journal article" date="2019" name="Proc. Natl. Acad. Sci. U.S.A.">
        <title>Molecular mimicry between Anoctamin 2 and Epstein-Barr virus nuclear antigen 1 associates with multiple sclerosis risk.</title>
        <authorList>
            <person name="Tengvall K."/>
            <person name="Huang J."/>
            <person name="Hellstroem C."/>
            <person name="Kammer P."/>
            <person name="Bistroem M."/>
            <person name="Ayoglu B."/>
            <person name="Lima Bomfim I."/>
            <person name="Stridh P."/>
            <person name="Butt J."/>
            <person name="Brenner N."/>
            <person name="Michel A."/>
            <person name="Lundberg K."/>
            <person name="Padyukov L."/>
            <person name="Lundberg I.E."/>
            <person name="Svenungsson E."/>
            <person name="Ernberg I."/>
            <person name="Olafsson S."/>
            <person name="Dilthey A.T."/>
            <person name="Hillert J."/>
            <person name="Alfredsson L."/>
            <person name="Sundstroem P."/>
            <person name="Nilsson P."/>
            <person name="Waterboer T."/>
            <person name="Olsson T."/>
            <person name="Kockum I."/>
        </authorList>
    </citation>
    <scope>MOLECULAR MIMICRY WITH EPSTEIN-BARR VIRUS EBNA1</scope>
</reference>
<accession>Q9NQ90</accession>
<accession>C4N787</accession>
<accession>Q9H847</accession>
<comment type="function">
    <text evidence="5 6">Calcium-activated chloride channel (CaCC) which may play a role in olfactory signal transduction. Odorant molecules bind to odor-sensing receptors (OSRs), leading to an increase in calcium entry that activates CaCC current which amplifies the depolarization of the OSR cells, ANO2 seems to be the underlying chloride channel involved in this process. May mediate light perception amplification in retina.</text>
</comment>
<comment type="catalytic activity">
    <reaction evidence="5">
        <text>chloride(in) = chloride(out)</text>
        <dbReference type="Rhea" id="RHEA:29823"/>
        <dbReference type="ChEBI" id="CHEBI:17996"/>
    </reaction>
</comment>
<comment type="activity regulation">
    <text evidence="1">Channel activity is repressed by chloride inhibitors; strongly by niflumic acid (NFA), partially by flufenamic acid (FFA), and only slightly by meclofenamic acid (MFA), 5-Nitro-2-(3-phenylpropylamino)benzoic acid (NPPB), 4-acetamido-4'-isothiocyanato-stilben-2,2'-disulfonate (SITS), and 4,4'-diisothiocyanatostilbene-2,2'-disulfonic acid (DIDS).</text>
</comment>
<comment type="subunit">
    <text evidence="2">Homodimer (By similarity). Component of a presynaptic protein complex recruited to specialized plasma membrane domains of photoreceptors (By similarity). Interacts with DLG4 by its C-terminal region (By similarity).</text>
</comment>
<comment type="interaction">
    <interactant intactId="EBI-20731422">
        <id>Q9NQ90</id>
    </interactant>
    <interactant intactId="EBI-357481">
        <id>Q12959</id>
        <label>DLG1</label>
    </interactant>
    <organismsDiffer>false</organismsDiffer>
    <experiments>2</experiments>
</comment>
<comment type="subcellular location">
    <subcellularLocation>
        <location evidence="6">Cell membrane</location>
        <topology evidence="3">Multi-pass membrane protein</topology>
    </subcellularLocation>
</comment>
<comment type="alternative products">
    <event type="alternative splicing"/>
    <isoform>
        <id>Q9NQ90-1</id>
        <name>1</name>
        <sequence type="displayed"/>
    </isoform>
    <isoform>
        <id>Q9NQ90-2</id>
        <name>2</name>
        <sequence type="described" ref="VSP_040493 VSP_040494"/>
    </isoform>
</comment>
<comment type="tissue specificity">
    <text evidence="5">Retina, especially in the photoreceptor synaptic terminals.</text>
</comment>
<comment type="miscellaneous">
    <text>The term 'anoctamin' was coined because these channels are anion selective and have eight (OCT) transmembrane segments. There is some dissatisfaction in the field with the Ano nomenclature because it is not certain that all the members of this family are anion channels or have the 8-transmembrane topology.</text>
</comment>
<comment type="miscellaneous">
    <molecule>Isoform 1</molecule>
    <text>Splice site between exons 4 and 5 is non-canonical.</text>
</comment>
<comment type="miscellaneous">
    <molecule>Isoform 2</molecule>
    <text evidence="9">Splice site between exons 4 and 5 is non-canonical.</text>
</comment>
<comment type="miscellaneous">
    <text evidence="7">A molecular mimicry between ANO2 and Epstein-Barr virus EBNA1 could possibly be linked to multiple sclerosis in the host.</text>
</comment>
<comment type="similarity">
    <text evidence="9">Belongs to the anoctamin family.</text>
</comment>
<comment type="sequence caution" evidence="9">
    <conflict type="erroneous initiation">
        <sequence resource="EMBL-CDS" id="BAB14773"/>
    </conflict>
    <text>Truncated N-terminus.</text>
</comment>
<dbReference type="EMBL" id="AJ272204">
    <property type="protein sequence ID" value="CAC01125.1"/>
    <property type="molecule type" value="mRNA"/>
</dbReference>
<dbReference type="EMBL" id="FJ384095">
    <property type="protein sequence ID" value="ACL36050.1"/>
    <property type="molecule type" value="mRNA"/>
</dbReference>
<dbReference type="EMBL" id="AC006431">
    <property type="status" value="NOT_ANNOTATED_CDS"/>
    <property type="molecule type" value="Genomic_DNA"/>
</dbReference>
<dbReference type="EMBL" id="AC006560">
    <property type="status" value="NOT_ANNOTATED_CDS"/>
    <property type="molecule type" value="Genomic_DNA"/>
</dbReference>
<dbReference type="EMBL" id="AC137627">
    <property type="status" value="NOT_ANNOTATED_CDS"/>
    <property type="molecule type" value="Genomic_DNA"/>
</dbReference>
<dbReference type="EMBL" id="AK024010">
    <property type="protein sequence ID" value="BAB14773.1"/>
    <property type="status" value="ALT_INIT"/>
    <property type="molecule type" value="mRNA"/>
</dbReference>
<dbReference type="CCDS" id="CCDS44807.2">
    <molecule id="Q9NQ90-2"/>
</dbReference>
<dbReference type="CCDS" id="CCDS91643.1">
    <molecule id="Q9NQ90-1"/>
</dbReference>
<dbReference type="RefSeq" id="NP_001265525.1">
    <molecule id="Q9NQ90-1"/>
    <property type="nucleotide sequence ID" value="NM_001278596.3"/>
</dbReference>
<dbReference type="RefSeq" id="NP_001265526.1">
    <molecule id="Q9NQ90-2"/>
    <property type="nucleotide sequence ID" value="NM_001278597.3"/>
</dbReference>
<dbReference type="SMR" id="Q9NQ90"/>
<dbReference type="BioGRID" id="121367">
    <property type="interactions" value="2"/>
</dbReference>
<dbReference type="FunCoup" id="Q9NQ90">
    <property type="interactions" value="721"/>
</dbReference>
<dbReference type="IntAct" id="Q9NQ90">
    <property type="interactions" value="1"/>
</dbReference>
<dbReference type="STRING" id="9606.ENSP00000348453"/>
<dbReference type="BindingDB" id="Q9NQ90"/>
<dbReference type="ChEMBL" id="CHEMBL4105767"/>
<dbReference type="TCDB" id="1.A.17.1.3">
    <property type="family name" value="the calcium-dependent chloride channel (ca-clc) family"/>
</dbReference>
<dbReference type="GlyCosmos" id="Q9NQ90">
    <property type="glycosylation" value="4 sites, No reported glycans"/>
</dbReference>
<dbReference type="GlyGen" id="Q9NQ90">
    <property type="glycosylation" value="8 sites, 1 O-linked glycan (3 sites)"/>
</dbReference>
<dbReference type="iPTMnet" id="Q9NQ90"/>
<dbReference type="PhosphoSitePlus" id="Q9NQ90"/>
<dbReference type="BioMuta" id="ANO2"/>
<dbReference type="DMDM" id="262527528"/>
<dbReference type="MassIVE" id="Q9NQ90"/>
<dbReference type="PaxDb" id="9606-ENSP00000348453"/>
<dbReference type="PeptideAtlas" id="Q9NQ90"/>
<dbReference type="ProteomicsDB" id="82108">
    <molecule id="Q9NQ90-1"/>
</dbReference>
<dbReference type="ProteomicsDB" id="82109">
    <molecule id="Q9NQ90-2"/>
</dbReference>
<dbReference type="Antibodypedia" id="41841">
    <property type="antibodies" value="139 antibodies from 28 providers"/>
</dbReference>
<dbReference type="DNASU" id="57101"/>
<dbReference type="Ensembl" id="ENST00000356134.9">
    <molecule id="Q9NQ90-2"/>
    <property type="protein sequence ID" value="ENSP00000348453.5"/>
    <property type="gene ID" value="ENSG00000047617.18"/>
</dbReference>
<dbReference type="Ensembl" id="ENST00000650848.1">
    <molecule id="Q9NQ90-1"/>
    <property type="protein sequence ID" value="ENSP00000498903.1"/>
    <property type="gene ID" value="ENSG00000047617.18"/>
</dbReference>
<dbReference type="GeneID" id="57101"/>
<dbReference type="KEGG" id="hsa:57101"/>
<dbReference type="UCSC" id="uc058kbk.1">
    <molecule id="Q9NQ90-1"/>
    <property type="organism name" value="human"/>
</dbReference>
<dbReference type="AGR" id="HGNC:1183"/>
<dbReference type="CTD" id="57101"/>
<dbReference type="DisGeNET" id="57101"/>
<dbReference type="GeneCards" id="ANO2"/>
<dbReference type="HGNC" id="HGNC:1183">
    <property type="gene designation" value="ANO2"/>
</dbReference>
<dbReference type="HPA" id="ENSG00000047617">
    <property type="expression patterns" value="Tissue enriched (retina)"/>
</dbReference>
<dbReference type="MIM" id="610109">
    <property type="type" value="gene"/>
</dbReference>
<dbReference type="neXtProt" id="NX_Q9NQ90"/>
<dbReference type="OpenTargets" id="ENSG00000047617"/>
<dbReference type="PharmGKB" id="PA25504"/>
<dbReference type="VEuPathDB" id="HostDB:ENSG00000047617"/>
<dbReference type="eggNOG" id="KOG2514">
    <property type="taxonomic scope" value="Eukaryota"/>
</dbReference>
<dbReference type="GeneTree" id="ENSGT00940000155840"/>
<dbReference type="HOGENOM" id="CLU_006685_1_2_1"/>
<dbReference type="InParanoid" id="Q9NQ90"/>
<dbReference type="OrthoDB" id="296386at2759"/>
<dbReference type="PAN-GO" id="Q9NQ90">
    <property type="GO annotations" value="3 GO annotations based on evolutionary models"/>
</dbReference>
<dbReference type="PhylomeDB" id="Q9NQ90"/>
<dbReference type="TreeFam" id="TF314265"/>
<dbReference type="PathwayCommons" id="Q9NQ90"/>
<dbReference type="Reactome" id="R-HSA-2672351">
    <property type="pathway name" value="Stimuli-sensing channels"/>
</dbReference>
<dbReference type="Reactome" id="R-HSA-381753">
    <property type="pathway name" value="Olfactory Signaling Pathway"/>
</dbReference>
<dbReference type="Reactome" id="R-HSA-9733458">
    <property type="pathway name" value="Induction of Cell-Cell Fusion"/>
</dbReference>
<dbReference type="SignaLink" id="Q9NQ90"/>
<dbReference type="BioGRID-ORCS" id="57101">
    <property type="hits" value="6 hits in 302 CRISPR screens"/>
</dbReference>
<dbReference type="ChiTaRS" id="ANO2">
    <property type="organism name" value="human"/>
</dbReference>
<dbReference type="GenomeRNAi" id="57101"/>
<dbReference type="Pharos" id="Q9NQ90">
    <property type="development level" value="Tchem"/>
</dbReference>
<dbReference type="PRO" id="PR:Q9NQ90"/>
<dbReference type="Proteomes" id="UP000005640">
    <property type="component" value="Chromosome 12"/>
</dbReference>
<dbReference type="RNAct" id="Q9NQ90">
    <property type="molecule type" value="protein"/>
</dbReference>
<dbReference type="Bgee" id="ENSG00000047617">
    <property type="expression patterns" value="Expressed in sural nerve and 95 other cell types or tissues"/>
</dbReference>
<dbReference type="ExpressionAtlas" id="Q9NQ90">
    <property type="expression patterns" value="baseline and differential"/>
</dbReference>
<dbReference type="GO" id="GO:0034707">
    <property type="term" value="C:chloride channel complex"/>
    <property type="evidence" value="ECO:0007669"/>
    <property type="project" value="UniProtKB-KW"/>
</dbReference>
<dbReference type="GO" id="GO:0005654">
    <property type="term" value="C:nucleoplasm"/>
    <property type="evidence" value="ECO:0000314"/>
    <property type="project" value="HPA"/>
</dbReference>
<dbReference type="GO" id="GO:0005886">
    <property type="term" value="C:plasma membrane"/>
    <property type="evidence" value="ECO:0000314"/>
    <property type="project" value="HPA"/>
</dbReference>
<dbReference type="GO" id="GO:0005254">
    <property type="term" value="F:chloride channel activity"/>
    <property type="evidence" value="ECO:0000304"/>
    <property type="project" value="Reactome"/>
</dbReference>
<dbReference type="GO" id="GO:0005229">
    <property type="term" value="F:intracellularly calcium-gated chloride channel activity"/>
    <property type="evidence" value="ECO:0000314"/>
    <property type="project" value="UniProtKB"/>
</dbReference>
<dbReference type="GO" id="GO:0046983">
    <property type="term" value="F:protein dimerization activity"/>
    <property type="evidence" value="ECO:0000314"/>
    <property type="project" value="UniProtKB"/>
</dbReference>
<dbReference type="GO" id="GO:1902476">
    <property type="term" value="P:chloride transmembrane transport"/>
    <property type="evidence" value="ECO:0000318"/>
    <property type="project" value="GO_Central"/>
</dbReference>
<dbReference type="GO" id="GO:0034220">
    <property type="term" value="P:monoatomic ion transmembrane transport"/>
    <property type="evidence" value="ECO:0000304"/>
    <property type="project" value="Reactome"/>
</dbReference>
<dbReference type="InterPro" id="IPR032394">
    <property type="entry name" value="Anoct_dimer"/>
</dbReference>
<dbReference type="InterPro" id="IPR007632">
    <property type="entry name" value="Anoctamin"/>
</dbReference>
<dbReference type="InterPro" id="IPR049452">
    <property type="entry name" value="Anoctamin_TM"/>
</dbReference>
<dbReference type="PANTHER" id="PTHR12308">
    <property type="entry name" value="ANOCTAMIN"/>
    <property type="match status" value="1"/>
</dbReference>
<dbReference type="PANTHER" id="PTHR12308:SF20">
    <property type="entry name" value="ANOCTAMIN-2"/>
    <property type="match status" value="1"/>
</dbReference>
<dbReference type="Pfam" id="PF16178">
    <property type="entry name" value="Anoct_dimer"/>
    <property type="match status" value="1"/>
</dbReference>
<dbReference type="Pfam" id="PF04547">
    <property type="entry name" value="Anoctamin"/>
    <property type="match status" value="1"/>
</dbReference>
<evidence type="ECO:0000250" key="1"/>
<evidence type="ECO:0000250" key="2">
    <source>
        <dbReference type="UniProtKB" id="Q8CFW1"/>
    </source>
</evidence>
<evidence type="ECO:0000255" key="3"/>
<evidence type="ECO:0000256" key="4">
    <source>
        <dbReference type="SAM" id="MobiDB-lite"/>
    </source>
</evidence>
<evidence type="ECO:0000269" key="5">
    <source>
    </source>
</evidence>
<evidence type="ECO:0000269" key="6">
    <source>
    </source>
</evidence>
<evidence type="ECO:0000269" key="7">
    <source>
    </source>
</evidence>
<evidence type="ECO:0000303" key="8">
    <source ref="1"/>
</evidence>
<evidence type="ECO:0000305" key="9"/>
<feature type="chain" id="PRO_0000072564" description="Anoctamin-2">
    <location>
        <begin position="1"/>
        <end position="1003"/>
    </location>
</feature>
<feature type="topological domain" description="Cytoplasmic" evidence="3">
    <location>
        <begin position="1"/>
        <end position="365"/>
    </location>
</feature>
<feature type="transmembrane region" description="Helical" evidence="3">
    <location>
        <begin position="366"/>
        <end position="386"/>
    </location>
</feature>
<feature type="topological domain" description="Extracellular" evidence="3">
    <location>
        <begin position="387"/>
        <end position="434"/>
    </location>
</feature>
<feature type="transmembrane region" description="Helical" evidence="3">
    <location>
        <begin position="435"/>
        <end position="455"/>
    </location>
</feature>
<feature type="topological domain" description="Cytoplasmic" evidence="3">
    <location>
        <begin position="456"/>
        <end position="538"/>
    </location>
</feature>
<feature type="transmembrane region" description="Helical" evidence="3">
    <location>
        <begin position="539"/>
        <end position="559"/>
    </location>
</feature>
<feature type="topological domain" description="Extracellular" evidence="3">
    <location>
        <begin position="560"/>
        <end position="582"/>
    </location>
</feature>
<feature type="transmembrane region" description="Helical" evidence="3">
    <location>
        <begin position="583"/>
        <end position="603"/>
    </location>
</feature>
<feature type="topological domain" description="Cytoplasmic" evidence="3">
    <location>
        <begin position="604"/>
        <end position="623"/>
    </location>
</feature>
<feature type="transmembrane region" description="Helical" evidence="3">
    <location>
        <begin position="624"/>
        <end position="644"/>
    </location>
</feature>
<feature type="topological domain" description="Extracellular" evidence="3">
    <location>
        <begin position="645"/>
        <end position="748"/>
    </location>
</feature>
<feature type="transmembrane region" description="Helical" evidence="3">
    <location>
        <begin position="749"/>
        <end position="769"/>
    </location>
</feature>
<feature type="topological domain" description="Cytoplasmic" evidence="3">
    <location>
        <begin position="770"/>
        <end position="801"/>
    </location>
</feature>
<feature type="transmembrane region" description="Helical" evidence="3">
    <location>
        <begin position="802"/>
        <end position="822"/>
    </location>
</feature>
<feature type="topological domain" description="Extracellular" evidence="3">
    <location>
        <begin position="823"/>
        <end position="907"/>
    </location>
</feature>
<feature type="transmembrane region" description="Helical" evidence="3">
    <location>
        <begin position="908"/>
        <end position="928"/>
    </location>
</feature>
<feature type="topological domain" description="Cytoplasmic" evidence="3">
    <location>
        <begin position="929"/>
        <end position="1003"/>
    </location>
</feature>
<feature type="region of interest" description="Disordered" evidence="4">
    <location>
        <begin position="1"/>
        <end position="68"/>
    </location>
</feature>
<feature type="region of interest" description="Disordered" evidence="4">
    <location>
        <begin position="961"/>
        <end position="1003"/>
    </location>
</feature>
<feature type="short sequence motif" description="DLG4 binding (PDZ)">
    <location>
        <begin position="1001"/>
        <end position="1003"/>
    </location>
</feature>
<feature type="compositionally biased region" description="Low complexity" evidence="4">
    <location>
        <begin position="10"/>
        <end position="21"/>
    </location>
</feature>
<feature type="compositionally biased region" description="Low complexity" evidence="4">
    <location>
        <begin position="978"/>
        <end position="1003"/>
    </location>
</feature>
<feature type="glycosylation site" description="N-linked (GlcNAc...) asparagine" evidence="3">
    <location>
        <position position="422"/>
    </location>
</feature>
<feature type="glycosylation site" description="N-linked (GlcNAc...) asparagine" evidence="3">
    <location>
        <position position="841"/>
    </location>
</feature>
<feature type="glycosylation site" description="N-linked (GlcNAc...) asparagine" evidence="3">
    <location>
        <position position="849"/>
    </location>
</feature>
<feature type="glycosylation site" description="N-linked (GlcNAc...) asparagine" evidence="3">
    <location>
        <position position="856"/>
    </location>
</feature>
<feature type="splice variant" id="VSP_040493" description="In isoform 2." evidence="8">
    <location>
        <begin position="1"/>
        <end position="4"/>
    </location>
</feature>
<feature type="splice variant" id="VSP_040494" description="In isoform 2." evidence="8">
    <original>GPR</original>
    <variation>MPE</variation>
    <location>
        <begin position="5"/>
        <end position="7"/>
    </location>
</feature>
<feature type="sequence variant" id="VAR_021932" description="In dbSNP:rs3741903.">
    <original>V</original>
    <variation>A</variation>
    <location>
        <position position="112"/>
    </location>
</feature>
<feature type="sequence variant" id="VAR_057286" description="In dbSNP:rs3741901.">
    <original>P</original>
    <variation>S</variation>
    <location>
        <position position="147"/>
    </location>
</feature>
<feature type="sequence variant" id="VAR_061853" description="In dbSNP:rs17788563.">
    <original>M</original>
    <variation>I</variation>
    <location>
        <position position="401"/>
    </location>
</feature>
<feature type="sequence variant" id="VAR_020331" description="In dbSNP:rs1860961.">
    <original>S</original>
    <variation>A</variation>
    <location>
        <position position="505"/>
    </location>
</feature>
<sequence length="1003" mass="113969">MATPGPRDIPLLPGSPRRLSPQAGSRGGQGPKHGQQCLKMPGPRAPGLQGGSNRDPGQPCGGESTRSSSVINNYLDANEPVSLEARLSRMHFHDSQRKVDYVLAYHYRKRGVHLAQGFPGHSLAIVSNGETGKEPHAGGPGDIELGPLDALEEERKEQREEFEHNLMEAGLELEKDLENKSQGSIFVRIHAPWQVLAREAEFLKIKVPTKKEMYEIKAGGSIAKKFSAALQKLSSHLQPRVPEHSNNKMKNLSYPFSREKMYLYNIQEKDTFFDNATRSRIVHEILKRTACSRANNTMGINSLIANNIYEAAYPLHDGEYDSPEDDMNDRKLLYQEWARYGVFYKFQPIDLIRKYFGEKIGLYFAWLGLYTSFLIPSSVIGVIVFLYGCATIEEDIPSREMCDQQNAFTMCPLCDKSCDYWNLSSACGTAQASHLFDNPATVFFSIFMALWATMFLENWKRLQMRLGYFWDLTGIEEEEERAQEHSRPEYETKVREKMLKESNQSAVQKLETNTTECGDEDDEDKLTWKDRFPGYLMNFASILFMIALTFSIVFGVIVYRITTAAALSLNKATRSNVRVTVTATAVIINLVVILILDEIYGAVAKWLTKIEVPKTEQTFEERLILKAFLLKFVNAYSPIFYVAFFKGRFVGRPGSYVYVFDGYRMEECAPGGCLMELCIQLSIIMLGKQLIQNNIFEIGVPKLKKLFRKLKDETEAGETDSAHSKHPEQWDLDYSLEPYTGLTPEYMEMIIQFGFVTLFVASFPLAPVFALLNNVIEVRLDAKKFVTELRRPDAVRTKDIGIWFDILSGIGKFSVISNAFVIAITSDFIPRLVYQYSYSHNGTLHGFVNHTLSFFNVSQLKEGTQPENSQFDQEVQFCRFKDYREPPWAPNPYEFSKQYWFILSARLAFVIIFQNLVMFLSVLVDWMIPDIPTDISDQIKKEKSLLVDFFLKEEHEKLKLMDEPALRSPGGGDRSRSRAASSAPSGQSQLGSMMSSGSQHTNV</sequence>